<feature type="chain" id="PRO_0000144365" description="ATP synthase subunit alpha">
    <location>
        <begin position="1"/>
        <end position="513"/>
    </location>
</feature>
<feature type="binding site" evidence="1">
    <location>
        <begin position="169"/>
        <end position="176"/>
    </location>
    <ligand>
        <name>ATP</name>
        <dbReference type="ChEBI" id="CHEBI:30616"/>
    </ligand>
</feature>
<feature type="site" description="Required for activity">
    <location>
        <position position="373"/>
    </location>
</feature>
<protein>
    <recommendedName>
        <fullName evidence="1">ATP synthase subunit alpha</fullName>
        <ecNumber evidence="1">7.1.2.2</ecNumber>
    </recommendedName>
    <alternativeName>
        <fullName evidence="1">ATP synthase F1 sector subunit alpha</fullName>
    </alternativeName>
    <alternativeName>
        <fullName evidence="1">F-ATPase subunit alpha</fullName>
    </alternativeName>
</protein>
<comment type="function">
    <text evidence="1">Produces ATP from ADP in the presence of a proton gradient across the membrane. The alpha chain is a regulatory subunit.</text>
</comment>
<comment type="catalytic activity">
    <reaction evidence="1">
        <text>ATP + H2O + 4 H(+)(in) = ADP + phosphate + 5 H(+)(out)</text>
        <dbReference type="Rhea" id="RHEA:57720"/>
        <dbReference type="ChEBI" id="CHEBI:15377"/>
        <dbReference type="ChEBI" id="CHEBI:15378"/>
        <dbReference type="ChEBI" id="CHEBI:30616"/>
        <dbReference type="ChEBI" id="CHEBI:43474"/>
        <dbReference type="ChEBI" id="CHEBI:456216"/>
        <dbReference type="EC" id="7.1.2.2"/>
    </reaction>
</comment>
<comment type="subunit">
    <text evidence="1">F-type ATPases have 2 components, CF(1) - the catalytic core - and CF(0) - the membrane proton channel. CF(1) has five subunits: alpha(3), beta(3), gamma(1), delta(1), epsilon(1). CF(0) has three main subunits: a(1), b(2) and c(9-12). The alpha and beta chains form an alternating ring which encloses part of the gamma chain. CF(1) is attached to CF(0) by a central stalk formed by the gamma and epsilon chains, while a peripheral stalk is formed by the delta and b chains.</text>
</comment>
<comment type="subcellular location">
    <subcellularLocation>
        <location evidence="1">Cell inner membrane</location>
        <topology evidence="1">Peripheral membrane protein</topology>
    </subcellularLocation>
</comment>
<comment type="similarity">
    <text evidence="1">Belongs to the ATPase alpha/beta chains family.</text>
</comment>
<comment type="sequence caution" evidence="2">
    <conflict type="erroneous initiation">
        <sequence resource="EMBL-CDS" id="AAF95905"/>
    </conflict>
</comment>
<sequence>MQLNSTEISDLIKQRIESFNVVSEARNEGTIVSVSDGIIRIHGLADVMQGEMIELPGNRYALALNLERDSVGAVVMGPYADLREGMKVTGTGRILEVPVGPELLGRVVNTLGEPIDGKGPIGAKQTSPVEVIAPGVIDRKSVDQPVQTGYKSVDSMIPIGRGQRELIIGDRQTGKTALAIDAIINQKNSGIYSIYVAIGQKASTIANVVRKLEEHGALKNTIVVVASASESAALQYLAPYSGCAMGEYFRDRGEDALIVYDDLSKQAVAYRQISLLLRRPPGREAFPGDVFYLHSRLLERAARVNEEYVERFTKGEVKGKTGSLTALPIIETQAGDVSAFVPTNVISITDGQIFLQTELFNAGVRPAVDPGISVSRVGGAAQTKIVKKLSGGIRTALAAYRELAAFAQFSSDLDEATKRQLTHGQKVTELMKQKQYAPMSVFDQALVIFAAERGYLTDVELNKVLDFEAALLSYARAHYAELAAQIDKTGAYNDEIEAQLKKLVDDFKATQTW</sequence>
<organism>
    <name type="scientific">Vibrio cholerae serotype O1 (strain ATCC 39315 / El Tor Inaba N16961)</name>
    <dbReference type="NCBI Taxonomy" id="243277"/>
    <lineage>
        <taxon>Bacteria</taxon>
        <taxon>Pseudomonadati</taxon>
        <taxon>Pseudomonadota</taxon>
        <taxon>Gammaproteobacteria</taxon>
        <taxon>Vibrionales</taxon>
        <taxon>Vibrionaceae</taxon>
        <taxon>Vibrio</taxon>
    </lineage>
</organism>
<gene>
    <name evidence="1" type="primary">atpA</name>
    <name type="ordered locus">VC_2766</name>
</gene>
<accession>Q9KNH3</accession>
<proteinExistence type="inferred from homology"/>
<keyword id="KW-0066">ATP synthesis</keyword>
<keyword id="KW-0067">ATP-binding</keyword>
<keyword id="KW-0997">Cell inner membrane</keyword>
<keyword id="KW-1003">Cell membrane</keyword>
<keyword id="KW-0139">CF(1)</keyword>
<keyword id="KW-0375">Hydrogen ion transport</keyword>
<keyword id="KW-0406">Ion transport</keyword>
<keyword id="KW-0472">Membrane</keyword>
<keyword id="KW-0547">Nucleotide-binding</keyword>
<keyword id="KW-1185">Reference proteome</keyword>
<keyword id="KW-1278">Translocase</keyword>
<keyword id="KW-0813">Transport</keyword>
<reference key="1">
    <citation type="journal article" date="2000" name="Nature">
        <title>DNA sequence of both chromosomes of the cholera pathogen Vibrio cholerae.</title>
        <authorList>
            <person name="Heidelberg J.F."/>
            <person name="Eisen J.A."/>
            <person name="Nelson W.C."/>
            <person name="Clayton R.A."/>
            <person name="Gwinn M.L."/>
            <person name="Dodson R.J."/>
            <person name="Haft D.H."/>
            <person name="Hickey E.K."/>
            <person name="Peterson J.D."/>
            <person name="Umayam L.A."/>
            <person name="Gill S.R."/>
            <person name="Nelson K.E."/>
            <person name="Read T.D."/>
            <person name="Tettelin H."/>
            <person name="Richardson D.L."/>
            <person name="Ermolaeva M.D."/>
            <person name="Vamathevan J.J."/>
            <person name="Bass S."/>
            <person name="Qin H."/>
            <person name="Dragoi I."/>
            <person name="Sellers P."/>
            <person name="McDonald L.A."/>
            <person name="Utterback T.R."/>
            <person name="Fleischmann R.D."/>
            <person name="Nierman W.C."/>
            <person name="White O."/>
            <person name="Salzberg S.L."/>
            <person name="Smith H.O."/>
            <person name="Colwell R.R."/>
            <person name="Mekalanos J.J."/>
            <person name="Venter J.C."/>
            <person name="Fraser C.M."/>
        </authorList>
    </citation>
    <scope>NUCLEOTIDE SEQUENCE [LARGE SCALE GENOMIC DNA]</scope>
    <source>
        <strain>ATCC 39315 / El Tor Inaba N16961</strain>
    </source>
</reference>
<name>ATPA_VIBCH</name>
<evidence type="ECO:0000255" key="1">
    <source>
        <dbReference type="HAMAP-Rule" id="MF_01346"/>
    </source>
</evidence>
<evidence type="ECO:0000305" key="2"/>
<dbReference type="EC" id="7.1.2.2" evidence="1"/>
<dbReference type="EMBL" id="AE003852">
    <property type="protein sequence ID" value="AAF95905.1"/>
    <property type="status" value="ALT_INIT"/>
    <property type="molecule type" value="Genomic_DNA"/>
</dbReference>
<dbReference type="PIR" id="H82036">
    <property type="entry name" value="H82036"/>
</dbReference>
<dbReference type="RefSeq" id="NP_232392.1">
    <property type="nucleotide sequence ID" value="NC_002505.1"/>
</dbReference>
<dbReference type="RefSeq" id="WP_001176739.1">
    <property type="nucleotide sequence ID" value="NZ_LT906614.1"/>
</dbReference>
<dbReference type="SMR" id="Q9KNH3"/>
<dbReference type="STRING" id="243277.VC_2766"/>
<dbReference type="EnsemblBacteria" id="AAF95905">
    <property type="protein sequence ID" value="AAF95905"/>
    <property type="gene ID" value="VC_2766"/>
</dbReference>
<dbReference type="GeneID" id="69721150"/>
<dbReference type="KEGG" id="vch:VC_2766"/>
<dbReference type="PATRIC" id="fig|243277.26.peg.2641"/>
<dbReference type="eggNOG" id="COG0056">
    <property type="taxonomic scope" value="Bacteria"/>
</dbReference>
<dbReference type="HOGENOM" id="CLU_010091_2_1_6"/>
<dbReference type="Proteomes" id="UP000000584">
    <property type="component" value="Chromosome 1"/>
</dbReference>
<dbReference type="GO" id="GO:0005886">
    <property type="term" value="C:plasma membrane"/>
    <property type="evidence" value="ECO:0007669"/>
    <property type="project" value="UniProtKB-SubCell"/>
</dbReference>
<dbReference type="GO" id="GO:0045259">
    <property type="term" value="C:proton-transporting ATP synthase complex"/>
    <property type="evidence" value="ECO:0007669"/>
    <property type="project" value="UniProtKB-KW"/>
</dbReference>
<dbReference type="GO" id="GO:0043531">
    <property type="term" value="F:ADP binding"/>
    <property type="evidence" value="ECO:0000318"/>
    <property type="project" value="GO_Central"/>
</dbReference>
<dbReference type="GO" id="GO:0005524">
    <property type="term" value="F:ATP binding"/>
    <property type="evidence" value="ECO:0000318"/>
    <property type="project" value="GO_Central"/>
</dbReference>
<dbReference type="GO" id="GO:0046933">
    <property type="term" value="F:proton-transporting ATP synthase activity, rotational mechanism"/>
    <property type="evidence" value="ECO:0007669"/>
    <property type="project" value="UniProtKB-UniRule"/>
</dbReference>
<dbReference type="GO" id="GO:0015986">
    <property type="term" value="P:proton motive force-driven ATP synthesis"/>
    <property type="evidence" value="ECO:0000318"/>
    <property type="project" value="GO_Central"/>
</dbReference>
<dbReference type="CDD" id="cd18113">
    <property type="entry name" value="ATP-synt_F1_alpha_C"/>
    <property type="match status" value="1"/>
</dbReference>
<dbReference type="CDD" id="cd18116">
    <property type="entry name" value="ATP-synt_F1_alpha_N"/>
    <property type="match status" value="1"/>
</dbReference>
<dbReference type="CDD" id="cd01132">
    <property type="entry name" value="F1-ATPase_alpha_CD"/>
    <property type="match status" value="1"/>
</dbReference>
<dbReference type="FunFam" id="1.20.150.20:FF:000001">
    <property type="entry name" value="ATP synthase subunit alpha"/>
    <property type="match status" value="1"/>
</dbReference>
<dbReference type="FunFam" id="2.40.30.20:FF:000001">
    <property type="entry name" value="ATP synthase subunit alpha"/>
    <property type="match status" value="1"/>
</dbReference>
<dbReference type="FunFam" id="3.40.50.300:FF:000002">
    <property type="entry name" value="ATP synthase subunit alpha"/>
    <property type="match status" value="1"/>
</dbReference>
<dbReference type="Gene3D" id="2.40.30.20">
    <property type="match status" value="1"/>
</dbReference>
<dbReference type="Gene3D" id="1.20.150.20">
    <property type="entry name" value="ATP synthase alpha/beta chain, C-terminal domain"/>
    <property type="match status" value="1"/>
</dbReference>
<dbReference type="Gene3D" id="3.40.50.300">
    <property type="entry name" value="P-loop containing nucleotide triphosphate hydrolases"/>
    <property type="match status" value="1"/>
</dbReference>
<dbReference type="HAMAP" id="MF_01346">
    <property type="entry name" value="ATP_synth_alpha_bact"/>
    <property type="match status" value="1"/>
</dbReference>
<dbReference type="InterPro" id="IPR023366">
    <property type="entry name" value="ATP_synth_asu-like_sf"/>
</dbReference>
<dbReference type="InterPro" id="IPR000793">
    <property type="entry name" value="ATP_synth_asu_C"/>
</dbReference>
<dbReference type="InterPro" id="IPR038376">
    <property type="entry name" value="ATP_synth_asu_C_sf"/>
</dbReference>
<dbReference type="InterPro" id="IPR033732">
    <property type="entry name" value="ATP_synth_F1_a_nt-bd_dom"/>
</dbReference>
<dbReference type="InterPro" id="IPR005294">
    <property type="entry name" value="ATP_synth_F1_asu"/>
</dbReference>
<dbReference type="InterPro" id="IPR020003">
    <property type="entry name" value="ATPase_a/bsu_AS"/>
</dbReference>
<dbReference type="InterPro" id="IPR004100">
    <property type="entry name" value="ATPase_F1/V1/A1_a/bsu_N"/>
</dbReference>
<dbReference type="InterPro" id="IPR036121">
    <property type="entry name" value="ATPase_F1/V1/A1_a/bsu_N_sf"/>
</dbReference>
<dbReference type="InterPro" id="IPR000194">
    <property type="entry name" value="ATPase_F1/V1/A1_a/bsu_nucl-bd"/>
</dbReference>
<dbReference type="InterPro" id="IPR027417">
    <property type="entry name" value="P-loop_NTPase"/>
</dbReference>
<dbReference type="NCBIfam" id="TIGR00962">
    <property type="entry name" value="atpA"/>
    <property type="match status" value="1"/>
</dbReference>
<dbReference type="NCBIfam" id="NF009884">
    <property type="entry name" value="PRK13343.1"/>
    <property type="match status" value="1"/>
</dbReference>
<dbReference type="PANTHER" id="PTHR48082">
    <property type="entry name" value="ATP SYNTHASE SUBUNIT ALPHA, MITOCHONDRIAL"/>
    <property type="match status" value="1"/>
</dbReference>
<dbReference type="PANTHER" id="PTHR48082:SF2">
    <property type="entry name" value="ATP SYNTHASE SUBUNIT ALPHA, MITOCHONDRIAL"/>
    <property type="match status" value="1"/>
</dbReference>
<dbReference type="Pfam" id="PF00006">
    <property type="entry name" value="ATP-synt_ab"/>
    <property type="match status" value="1"/>
</dbReference>
<dbReference type="Pfam" id="PF00306">
    <property type="entry name" value="ATP-synt_ab_C"/>
    <property type="match status" value="1"/>
</dbReference>
<dbReference type="Pfam" id="PF02874">
    <property type="entry name" value="ATP-synt_ab_N"/>
    <property type="match status" value="1"/>
</dbReference>
<dbReference type="SUPFAM" id="SSF47917">
    <property type="entry name" value="C-terminal domain of alpha and beta subunits of F1 ATP synthase"/>
    <property type="match status" value="1"/>
</dbReference>
<dbReference type="SUPFAM" id="SSF50615">
    <property type="entry name" value="N-terminal domain of alpha and beta subunits of F1 ATP synthase"/>
    <property type="match status" value="1"/>
</dbReference>
<dbReference type="SUPFAM" id="SSF52540">
    <property type="entry name" value="P-loop containing nucleoside triphosphate hydrolases"/>
    <property type="match status" value="1"/>
</dbReference>
<dbReference type="PROSITE" id="PS00152">
    <property type="entry name" value="ATPASE_ALPHA_BETA"/>
    <property type="match status" value="1"/>
</dbReference>